<comment type="function">
    <text evidence="2 3 6 7 8 11">Component of the Mediator complex, a coactivator involved in the regulated transcription of nearly all RNA polymerase II-dependent genes. Mediator functions as a bridge to convey information from gene-specific regulatory proteins to the basal RNA polymerase II transcription machinery. The Mediator complex, having a compact conformation in its free form, is recruited to promoters by direct interactions with regulatory proteins and serves for the assembly of a functional preinitiation complex with RNA polymerase II and the general transcription factors. The Mediator complex unfolds to an extended conformation and partially surrounds RNA polymerase II, specifically interacting with the unphosphorylated form of the C-terminal domain (CTD) of RNA polymerase II. The Mediator complex dissociates from the RNA polymerase II holoenzyme and stays at the promoter when transcriptional elongation begins. MED8 binds to the consensus sequence 5'-[AC][AG]GAAAT-3' in both the UAS of SUC2 and the DRS2 of HXK2.</text>
</comment>
<comment type="subunit">
    <text evidence="3 4 8 9 10">Component of the Mediator complex, which is composed of at least 21 subunits that form three structurally distinct submodules. The Mediator head module contains MED6, MED8, MED11, SRB4/MED17, SRB5/MED18, ROX3/MED19, SRB2/MED20 and SRB6/MED22, the middle module contains MED1, MED4, NUT1/MED5, MED7, CSE2/MED9, NUT2/MED10, SRB7/MED21 and SOH1/MED31, and the tail module contains MED2, PGD1/MED3, RGR1/MED14, GAL11/MED15 and SIN4/MED16. The head and the middle modules interact directly with RNA polymerase II, whereas the elongated tail module interacts with gene-specific regulatory proteins. MED8 interacts directly with SRB5/MED18. Also interacts with Hexokinase B (HXK2). Interacts with TBP1.</text>
</comment>
<comment type="interaction">
    <interactant intactId="EBI-20932">
        <id>P38304</id>
    </interactant>
    <interactant intactId="EBI-19129">
        <id>P13393</id>
        <label>SPT15</label>
    </interactant>
    <organismsDiffer>false</organismsDiffer>
    <experiments>3</experiments>
</comment>
<comment type="interaction">
    <interactant intactId="EBI-20932">
        <id>P38304</id>
    </interactant>
    <interactant intactId="EBI-18018">
        <id>P34162</id>
        <label>SRB2</label>
    </interactant>
    <organismsDiffer>false</organismsDiffer>
    <experiments>3</experiments>
</comment>
<comment type="interaction">
    <interactant intactId="EBI-20932">
        <id>P38304</id>
    </interactant>
    <interactant intactId="EBI-18025">
        <id>P32569</id>
        <label>SRB4</label>
    </interactant>
    <organismsDiffer>false</organismsDiffer>
    <experiments>10</experiments>
</comment>
<comment type="interaction">
    <interactant intactId="EBI-20932">
        <id>P38304</id>
    </interactant>
    <interactant intactId="EBI-18032">
        <id>P32585</id>
        <label>SRB5</label>
    </interactant>
    <organismsDiffer>false</organismsDiffer>
    <experiments>9</experiments>
</comment>
<comment type="subcellular location">
    <subcellularLocation>
        <location evidence="12">Nucleus</location>
    </subcellularLocation>
</comment>
<comment type="miscellaneous">
    <text evidence="5">Present with 937 molecules/cell in log phase SD medium.</text>
</comment>
<comment type="similarity">
    <text evidence="12">Belongs to the Mediator complex subunit 8 family.</text>
</comment>
<evidence type="ECO:0000255" key="1"/>
<evidence type="ECO:0000269" key="2">
    <source>
    </source>
</evidence>
<evidence type="ECO:0000269" key="3">
    <source>
    </source>
</evidence>
<evidence type="ECO:0000269" key="4">
    <source>
    </source>
</evidence>
<evidence type="ECO:0000269" key="5">
    <source>
    </source>
</evidence>
<evidence type="ECO:0000269" key="6">
    <source>
    </source>
</evidence>
<evidence type="ECO:0000269" key="7">
    <source>
    </source>
</evidence>
<evidence type="ECO:0000269" key="8">
    <source>
    </source>
</evidence>
<evidence type="ECO:0000269" key="9">
    <source>
    </source>
</evidence>
<evidence type="ECO:0000269" key="10">
    <source>
    </source>
</evidence>
<evidence type="ECO:0000269" key="11">
    <source>
    </source>
</evidence>
<evidence type="ECO:0000305" key="12"/>
<evidence type="ECO:0007829" key="13">
    <source>
        <dbReference type="PDB" id="2HZS"/>
    </source>
</evidence>
<gene>
    <name type="primary">MED8</name>
    <name type="ordered locus">YBR193C</name>
    <name type="ORF">YBR1403</name>
</gene>
<organism>
    <name type="scientific">Saccharomyces cerevisiae (strain ATCC 204508 / S288c)</name>
    <name type="common">Baker's yeast</name>
    <dbReference type="NCBI Taxonomy" id="559292"/>
    <lineage>
        <taxon>Eukaryota</taxon>
        <taxon>Fungi</taxon>
        <taxon>Dikarya</taxon>
        <taxon>Ascomycota</taxon>
        <taxon>Saccharomycotina</taxon>
        <taxon>Saccharomycetes</taxon>
        <taxon>Saccharomycetales</taxon>
        <taxon>Saccharomycetaceae</taxon>
        <taxon>Saccharomyces</taxon>
    </lineage>
</organism>
<dbReference type="EMBL" id="Z21487">
    <property type="protein sequence ID" value="CAA79680.1"/>
    <property type="molecule type" value="Genomic_DNA"/>
</dbReference>
<dbReference type="EMBL" id="Z36062">
    <property type="protein sequence ID" value="CAA85155.1"/>
    <property type="molecule type" value="Genomic_DNA"/>
</dbReference>
<dbReference type="EMBL" id="AY557711">
    <property type="protein sequence ID" value="AAS56037.1"/>
    <property type="molecule type" value="Genomic_DNA"/>
</dbReference>
<dbReference type="EMBL" id="BK006936">
    <property type="protein sequence ID" value="DAA07307.1"/>
    <property type="molecule type" value="Genomic_DNA"/>
</dbReference>
<dbReference type="PIR" id="S34018">
    <property type="entry name" value="S34018"/>
</dbReference>
<dbReference type="RefSeq" id="NP_009752.3">
    <property type="nucleotide sequence ID" value="NM_001178541.3"/>
</dbReference>
<dbReference type="PDB" id="2HZS">
    <property type="method" value="X-ray"/>
    <property type="resolution" value="2.70 A"/>
    <property type="chains" value="I/J/K/L=190-210"/>
</dbReference>
<dbReference type="PDB" id="3J1O">
    <property type="method" value="EM"/>
    <property type="resolution" value="16.00 A"/>
    <property type="chains" value="J=1-223"/>
</dbReference>
<dbReference type="PDB" id="3RJ1">
    <property type="method" value="X-ray"/>
    <property type="resolution" value="4.30 A"/>
    <property type="chains" value="C/J/Q=1-223"/>
</dbReference>
<dbReference type="PDB" id="4GWP">
    <property type="method" value="X-ray"/>
    <property type="resolution" value="4.20 A"/>
    <property type="chains" value="C=1-223"/>
</dbReference>
<dbReference type="PDB" id="4GWQ">
    <property type="method" value="X-ray"/>
    <property type="resolution" value="4.50 A"/>
    <property type="chains" value="C=1-223"/>
</dbReference>
<dbReference type="PDB" id="4V1O">
    <property type="method" value="EM"/>
    <property type="resolution" value="9.70 A"/>
    <property type="chains" value="U=2-223"/>
</dbReference>
<dbReference type="PDB" id="5OQM">
    <property type="method" value="EM"/>
    <property type="resolution" value="5.80 A"/>
    <property type="chains" value="b=1-223"/>
</dbReference>
<dbReference type="PDB" id="5SVA">
    <property type="method" value="EM"/>
    <property type="resolution" value="15.30 A"/>
    <property type="chains" value="N=1-223"/>
</dbReference>
<dbReference type="PDB" id="7UI9">
    <property type="method" value="EM"/>
    <property type="resolution" value="3.30 A"/>
    <property type="chains" value="h=1-223"/>
</dbReference>
<dbReference type="PDB" id="7UIF">
    <property type="method" value="EM"/>
    <property type="resolution" value="4.60 A"/>
    <property type="chains" value="h=1-223"/>
</dbReference>
<dbReference type="PDB" id="7UIG">
    <property type="method" value="EM"/>
    <property type="resolution" value="4.30 A"/>
    <property type="chains" value="h=1-223"/>
</dbReference>
<dbReference type="PDB" id="7UIO">
    <property type="method" value="EM"/>
    <property type="resolution" value="3.30 A"/>
    <property type="chains" value="Ah/Bh=1-223"/>
</dbReference>
<dbReference type="PDB" id="8CEN">
    <property type="method" value="EM"/>
    <property type="resolution" value="3.00 A"/>
    <property type="chains" value="b=1-223"/>
</dbReference>
<dbReference type="PDB" id="8CEO">
    <property type="method" value="EM"/>
    <property type="resolution" value="3.60 A"/>
    <property type="chains" value="b=1-223"/>
</dbReference>
<dbReference type="PDBsum" id="2HZS"/>
<dbReference type="PDBsum" id="3J1O"/>
<dbReference type="PDBsum" id="3RJ1"/>
<dbReference type="PDBsum" id="4GWP"/>
<dbReference type="PDBsum" id="4GWQ"/>
<dbReference type="PDBsum" id="4V1O"/>
<dbReference type="PDBsum" id="5OQM"/>
<dbReference type="PDBsum" id="5SVA"/>
<dbReference type="PDBsum" id="7UI9"/>
<dbReference type="PDBsum" id="7UIF"/>
<dbReference type="PDBsum" id="7UIG"/>
<dbReference type="PDBsum" id="7UIO"/>
<dbReference type="PDBsum" id="8CEN"/>
<dbReference type="PDBsum" id="8CEO"/>
<dbReference type="EMDB" id="EMD-26542"/>
<dbReference type="EMDB" id="EMD-26544"/>
<dbReference type="EMDB" id="EMD-26545"/>
<dbReference type="EMDB" id="EMD-26551"/>
<dbReference type="EMDB" id="EMD-2786"/>
<dbReference type="EMDB" id="EMD-3850"/>
<dbReference type="EMDB" id="EMD-8305"/>
<dbReference type="SMR" id="P38304"/>
<dbReference type="BioGRID" id="32890">
    <property type="interactions" value="627"/>
</dbReference>
<dbReference type="ComplexPortal" id="CPX-3226">
    <property type="entry name" value="Core mediator complex"/>
</dbReference>
<dbReference type="DIP" id="DIP-1659N"/>
<dbReference type="FunCoup" id="P38304">
    <property type="interactions" value="199"/>
</dbReference>
<dbReference type="IntAct" id="P38304">
    <property type="interactions" value="30"/>
</dbReference>
<dbReference type="MINT" id="P38304"/>
<dbReference type="STRING" id="4932.YBR193C"/>
<dbReference type="GlyGen" id="P38304">
    <property type="glycosylation" value="1 site, 1 O-linked glycan (1 site)"/>
</dbReference>
<dbReference type="iPTMnet" id="P38304"/>
<dbReference type="PaxDb" id="4932-YBR193C"/>
<dbReference type="PeptideAtlas" id="P38304"/>
<dbReference type="TopDownProteomics" id="P38304"/>
<dbReference type="EnsemblFungi" id="YBR193C_mRNA">
    <property type="protein sequence ID" value="YBR193C"/>
    <property type="gene ID" value="YBR193C"/>
</dbReference>
<dbReference type="GeneID" id="852492"/>
<dbReference type="KEGG" id="sce:YBR193C"/>
<dbReference type="AGR" id="SGD:S000000397"/>
<dbReference type="SGD" id="S000000397">
    <property type="gene designation" value="MED8"/>
</dbReference>
<dbReference type="VEuPathDB" id="FungiDB:YBR193C"/>
<dbReference type="eggNOG" id="ENOG502S8U1">
    <property type="taxonomic scope" value="Eukaryota"/>
</dbReference>
<dbReference type="HOGENOM" id="CLU_108151_0_0_1"/>
<dbReference type="InParanoid" id="P38304"/>
<dbReference type="OMA" id="PQWYSLQ"/>
<dbReference type="OrthoDB" id="5329317at2759"/>
<dbReference type="BioCyc" id="YEAST:G3O-29135-MONOMER"/>
<dbReference type="BioGRID-ORCS" id="852492">
    <property type="hits" value="9 hits in 10 CRISPR screens"/>
</dbReference>
<dbReference type="EvolutionaryTrace" id="P38304"/>
<dbReference type="PRO" id="PR:P38304"/>
<dbReference type="Proteomes" id="UP000002311">
    <property type="component" value="Chromosome II"/>
</dbReference>
<dbReference type="RNAct" id="P38304">
    <property type="molecule type" value="protein"/>
</dbReference>
<dbReference type="GO" id="GO:0070847">
    <property type="term" value="C:core mediator complex"/>
    <property type="evidence" value="ECO:0000314"/>
    <property type="project" value="SGD"/>
</dbReference>
<dbReference type="GO" id="GO:0016592">
    <property type="term" value="C:mediator complex"/>
    <property type="evidence" value="ECO:0000318"/>
    <property type="project" value="GO_Central"/>
</dbReference>
<dbReference type="GO" id="GO:0005634">
    <property type="term" value="C:nucleus"/>
    <property type="evidence" value="ECO:0000314"/>
    <property type="project" value="ComplexPortal"/>
</dbReference>
<dbReference type="GO" id="GO:0030674">
    <property type="term" value="F:protein-macromolecule adaptor activity"/>
    <property type="evidence" value="ECO:0000315"/>
    <property type="project" value="SGD"/>
</dbReference>
<dbReference type="GO" id="GO:0000978">
    <property type="term" value="F:RNA polymerase II cis-regulatory region sequence-specific DNA binding"/>
    <property type="evidence" value="ECO:0000314"/>
    <property type="project" value="SGD"/>
</dbReference>
<dbReference type="GO" id="GO:0017025">
    <property type="term" value="F:TBP-class protein binding"/>
    <property type="evidence" value="ECO:0000314"/>
    <property type="project" value="SGD"/>
</dbReference>
<dbReference type="GO" id="GO:0003712">
    <property type="term" value="F:transcription coregulator activity"/>
    <property type="evidence" value="ECO:0000318"/>
    <property type="project" value="GO_Central"/>
</dbReference>
<dbReference type="GO" id="GO:0003714">
    <property type="term" value="F:transcription corepressor activity"/>
    <property type="evidence" value="ECO:0000353"/>
    <property type="project" value="SGD"/>
</dbReference>
<dbReference type="GO" id="GO:0000122">
    <property type="term" value="P:negative regulation of transcription by RNA polymerase II"/>
    <property type="evidence" value="ECO:0000314"/>
    <property type="project" value="SGD"/>
</dbReference>
<dbReference type="GO" id="GO:0045944">
    <property type="term" value="P:positive regulation of transcription by RNA polymerase II"/>
    <property type="evidence" value="ECO:0000315"/>
    <property type="project" value="SGD"/>
</dbReference>
<dbReference type="GO" id="GO:0032968">
    <property type="term" value="P:positive regulation of transcription elongation by RNA polymerase II"/>
    <property type="evidence" value="ECO:0000314"/>
    <property type="project" value="ComplexPortal"/>
</dbReference>
<dbReference type="GO" id="GO:0060261">
    <property type="term" value="P:positive regulation of transcription initiation by RNA polymerase II"/>
    <property type="evidence" value="ECO:0000314"/>
    <property type="project" value="ComplexPortal"/>
</dbReference>
<dbReference type="GO" id="GO:0006357">
    <property type="term" value="P:regulation of transcription by RNA polymerase II"/>
    <property type="evidence" value="ECO:0000318"/>
    <property type="project" value="GO_Central"/>
</dbReference>
<dbReference type="GO" id="GO:0051123">
    <property type="term" value="P:RNA polymerase II preinitiation complex assembly"/>
    <property type="evidence" value="ECO:0000314"/>
    <property type="project" value="ComplexPortal"/>
</dbReference>
<dbReference type="FunFam" id="1.20.58.1710:FF:000003">
    <property type="entry name" value="Mediator of RNA polymerase II transcription subunit 8"/>
    <property type="match status" value="1"/>
</dbReference>
<dbReference type="Gene3D" id="1.20.58.1710">
    <property type="match status" value="1"/>
</dbReference>
<dbReference type="Gene3D" id="6.10.250.2610">
    <property type="match status" value="1"/>
</dbReference>
<dbReference type="InterPro" id="IPR019364">
    <property type="entry name" value="Mediatior_Med8_fun/met"/>
</dbReference>
<dbReference type="PANTHER" id="PTHR13074">
    <property type="entry name" value="MEDIATOR OF RNA POLYMERASE II TRANSCRIPTION SUBUNIT 8"/>
    <property type="match status" value="1"/>
</dbReference>
<dbReference type="PANTHER" id="PTHR13074:SF9">
    <property type="entry name" value="MEDIATOR OF RNA POLYMERASE II TRANSCRIPTION SUBUNIT 8"/>
    <property type="match status" value="1"/>
</dbReference>
<dbReference type="Pfam" id="PF10232">
    <property type="entry name" value="Med8"/>
    <property type="match status" value="1"/>
</dbReference>
<feature type="initiator methionine" description="Removed" evidence="11">
    <location>
        <position position="1"/>
    </location>
</feature>
<feature type="chain" id="PRO_0000096397" description="Mediator of RNA polymerase II transcription subunit 8">
    <location>
        <begin position="2"/>
        <end position="223"/>
    </location>
</feature>
<feature type="region of interest" description="Interaction with TBP1" evidence="9">
    <location>
        <begin position="2"/>
        <end position="138"/>
    </location>
</feature>
<feature type="coiled-coil region" evidence="1">
    <location>
        <begin position="33"/>
        <end position="59"/>
    </location>
</feature>
<feature type="helix" evidence="13">
    <location>
        <begin position="198"/>
        <end position="207"/>
    </location>
</feature>
<reference key="1">
    <citation type="journal article" date="1993" name="Yeast">
        <title>RIM2, MSI1 and PGI1 are located within an 8 kb segment of Saccharomyces cerevisiae chromosome II, which also contains the putative ribosomal gene L21 and a new putative essential gene with a leucine zipper motif.</title>
        <authorList>
            <person name="Demolis N."/>
            <person name="Mallet L."/>
            <person name="Bussereau F."/>
            <person name="Jacquet M."/>
        </authorList>
    </citation>
    <scope>NUCLEOTIDE SEQUENCE [GENOMIC DNA]</scope>
    <source>
        <strain>ATCC 204508 / S288c</strain>
    </source>
</reference>
<reference key="2">
    <citation type="journal article" date="1994" name="EMBO J.">
        <title>Complete DNA sequence of yeast chromosome II.</title>
        <authorList>
            <person name="Feldmann H."/>
            <person name="Aigle M."/>
            <person name="Aljinovic G."/>
            <person name="Andre B."/>
            <person name="Baclet M.C."/>
            <person name="Barthe C."/>
            <person name="Baur A."/>
            <person name="Becam A.-M."/>
            <person name="Biteau N."/>
            <person name="Boles E."/>
            <person name="Brandt T."/>
            <person name="Brendel M."/>
            <person name="Brueckner M."/>
            <person name="Bussereau F."/>
            <person name="Christiansen C."/>
            <person name="Contreras R."/>
            <person name="Crouzet M."/>
            <person name="Cziepluch C."/>
            <person name="Demolis N."/>
            <person name="Delaveau T."/>
            <person name="Doignon F."/>
            <person name="Domdey H."/>
            <person name="Duesterhus S."/>
            <person name="Dubois E."/>
            <person name="Dujon B."/>
            <person name="El Bakkoury M."/>
            <person name="Entian K.-D."/>
            <person name="Feuermann M."/>
            <person name="Fiers W."/>
            <person name="Fobo G.M."/>
            <person name="Fritz C."/>
            <person name="Gassenhuber J."/>
            <person name="Glansdorff N."/>
            <person name="Goffeau A."/>
            <person name="Grivell L.A."/>
            <person name="de Haan M."/>
            <person name="Hein C."/>
            <person name="Herbert C.J."/>
            <person name="Hollenberg C.P."/>
            <person name="Holmstroem K."/>
            <person name="Jacq C."/>
            <person name="Jacquet M."/>
            <person name="Jauniaux J.-C."/>
            <person name="Jonniaux J.-L."/>
            <person name="Kallesoee T."/>
            <person name="Kiesau P."/>
            <person name="Kirchrath L."/>
            <person name="Koetter P."/>
            <person name="Korol S."/>
            <person name="Liebl S."/>
            <person name="Logghe M."/>
            <person name="Lohan A.J.E."/>
            <person name="Louis E.J."/>
            <person name="Li Z.Y."/>
            <person name="Maat M.J."/>
            <person name="Mallet L."/>
            <person name="Mannhaupt G."/>
            <person name="Messenguy F."/>
            <person name="Miosga T."/>
            <person name="Molemans F."/>
            <person name="Mueller S."/>
            <person name="Nasr F."/>
            <person name="Obermaier B."/>
            <person name="Perea J."/>
            <person name="Pierard A."/>
            <person name="Piravandi E."/>
            <person name="Pohl F.M."/>
            <person name="Pohl T.M."/>
            <person name="Potier S."/>
            <person name="Proft M."/>
            <person name="Purnelle B."/>
            <person name="Ramezani Rad M."/>
            <person name="Rieger M."/>
            <person name="Rose M."/>
            <person name="Schaaff-Gerstenschlaeger I."/>
            <person name="Scherens B."/>
            <person name="Schwarzlose C."/>
            <person name="Skala J."/>
            <person name="Slonimski P.P."/>
            <person name="Smits P.H.M."/>
            <person name="Souciet J.-L."/>
            <person name="Steensma H.Y."/>
            <person name="Stucka R."/>
            <person name="Urrestarazu L.A."/>
            <person name="van der Aart Q.J.M."/>
            <person name="Van Dyck L."/>
            <person name="Vassarotti A."/>
            <person name="Vetter I."/>
            <person name="Vierendeels F."/>
            <person name="Vissers S."/>
            <person name="Wagner G."/>
            <person name="de Wergifosse P."/>
            <person name="Wolfe K.H."/>
            <person name="Zagulski M."/>
            <person name="Zimmermann F.K."/>
            <person name="Mewes H.-W."/>
            <person name="Kleine K."/>
        </authorList>
    </citation>
    <scope>NUCLEOTIDE SEQUENCE [LARGE SCALE GENOMIC DNA]</scope>
    <source>
        <strain>ATCC 204508 / S288c</strain>
    </source>
</reference>
<reference key="3">
    <citation type="journal article" date="2014" name="G3 (Bethesda)">
        <title>The reference genome sequence of Saccharomyces cerevisiae: Then and now.</title>
        <authorList>
            <person name="Engel S.R."/>
            <person name="Dietrich F.S."/>
            <person name="Fisk D.G."/>
            <person name="Binkley G."/>
            <person name="Balakrishnan R."/>
            <person name="Costanzo M.C."/>
            <person name="Dwight S.S."/>
            <person name="Hitz B.C."/>
            <person name="Karra K."/>
            <person name="Nash R.S."/>
            <person name="Weng S."/>
            <person name="Wong E.D."/>
            <person name="Lloyd P."/>
            <person name="Skrzypek M.S."/>
            <person name="Miyasato S.R."/>
            <person name="Simison M."/>
            <person name="Cherry J.M."/>
        </authorList>
    </citation>
    <scope>GENOME REANNOTATION</scope>
    <source>
        <strain>ATCC 204508 / S288c</strain>
    </source>
</reference>
<reference key="4">
    <citation type="journal article" date="2007" name="Genome Res.">
        <title>Approaching a complete repository of sequence-verified protein-encoding clones for Saccharomyces cerevisiae.</title>
        <authorList>
            <person name="Hu Y."/>
            <person name="Rolfs A."/>
            <person name="Bhullar B."/>
            <person name="Murthy T.V.S."/>
            <person name="Zhu C."/>
            <person name="Berger M.F."/>
            <person name="Camargo A.A."/>
            <person name="Kelley F."/>
            <person name="McCarron S."/>
            <person name="Jepson D."/>
            <person name="Richardson A."/>
            <person name="Raphael J."/>
            <person name="Moreira D."/>
            <person name="Taycher E."/>
            <person name="Zuo D."/>
            <person name="Mohr S."/>
            <person name="Kane M.F."/>
            <person name="Williamson J."/>
            <person name="Simpson A.J.G."/>
            <person name="Bulyk M.L."/>
            <person name="Harlow E."/>
            <person name="Marsischky G."/>
            <person name="Kolodner R.D."/>
            <person name="LaBaer J."/>
        </authorList>
    </citation>
    <scope>NUCLEOTIDE SEQUENCE [GENOMIC DNA]</scope>
    <source>
        <strain>ATCC 204508 / S288c</strain>
    </source>
</reference>
<reference key="5">
    <citation type="journal article" date="1999" name="Biochem. Biophys. Res. Commun.">
        <title>Med8, a subunit of the mediator CTD complex of RNA polymerase II, directly binds to regulatory elements of SUC2 and HXK2 genes.</title>
        <authorList>
            <person name="Chaves R.S."/>
            <person name="Herrero P."/>
            <person name="Moreno F."/>
        </authorList>
    </citation>
    <scope>PROTEIN SEQUENCE OF 2-11</scope>
    <scope>FUNCTION</scope>
</reference>
<reference key="6">
    <citation type="journal article" date="1998" name="Genes Dev.">
        <title>The Med proteins of yeast and their function through the RNA polymerase II carboxy-terminal domain.</title>
        <authorList>
            <person name="Myers L.C."/>
            <person name="Gustafsson C.M."/>
            <person name="Bushnell D.A."/>
            <person name="Lui M."/>
            <person name="Erdjument-Bromage H."/>
            <person name="Tempst P."/>
            <person name="Kornberg R.D."/>
        </authorList>
    </citation>
    <scope>IDENTIFICATION BY MASS SPECTROMETRY</scope>
    <scope>COMPONENT OF MEDIATOR COMPLEX</scope>
</reference>
<reference key="7">
    <citation type="journal article" date="1999" name="FEBS Lett.">
        <title>Analysis by atomic force microscopy of Med8 binding to cis-acting regulatory elements of the SUC2 and HXK2 genes of Saccharomyces cerevisiae.</title>
        <authorList>
            <person name="Moreno-Herrero F."/>
            <person name="Herrero P."/>
            <person name="Colchero J."/>
            <person name="Baro A.M."/>
            <person name="Moreno F."/>
        </authorList>
    </citation>
    <scope>FUNCTION</scope>
    <scope>DNA-BINDING</scope>
</reference>
<reference key="8">
    <citation type="journal article" date="2001" name="J. Biol. Chem.">
        <title>The structural and functional organization of the yeast mediator complex.</title>
        <authorList>
            <person name="Kang J.S."/>
            <person name="Kim S.H."/>
            <person name="Hwang M.S."/>
            <person name="Han S.J."/>
            <person name="Lee Y.C."/>
            <person name="Kim Y.-J."/>
        </authorList>
    </citation>
    <scope>INTERACTION WITH SRB5</scope>
    <scope>FUNCTION OF THE MEDIATOR COMPLEX</scope>
    <scope>INTERACTION OF THE MEDIATOR COMPLEX WITH RNA POLYMERASE II</scope>
</reference>
<reference key="9">
    <citation type="journal article" date="2002" name="J. Mol. Biol.">
        <title>Mediator factor Med8p interacts with the hexokinase 2: implication in the glucose signalling pathway of Saccharomyces cerevisiae.</title>
        <authorList>
            <person name="de la Cera T."/>
            <person name="Herrero P."/>
            <person name="Moreno-Herrero F."/>
            <person name="Chaves R.S."/>
            <person name="Moreno F."/>
        </authorList>
    </citation>
    <scope>INTERACTION WITH HXK2</scope>
</reference>
<reference key="10">
    <citation type="journal article" date="2003" name="Nature">
        <title>Global analysis of protein expression in yeast.</title>
        <authorList>
            <person name="Ghaemmaghami S."/>
            <person name="Huh W.-K."/>
            <person name="Bower K."/>
            <person name="Howson R.W."/>
            <person name="Belle A."/>
            <person name="Dephoure N."/>
            <person name="O'Shea E.K."/>
            <person name="Weissman J.S."/>
        </authorList>
    </citation>
    <scope>LEVEL OF PROTEIN EXPRESSION [LARGE SCALE ANALYSIS]</scope>
</reference>
<reference key="11">
    <citation type="journal article" date="2004" name="Mol. Cell">
        <title>A unified nomenclature for protein subunits of mediator complexes linking transcriptional regulators to RNA polymerase II.</title>
        <authorList>
            <person name="Bourbon H.-M."/>
            <person name="Aguilera A."/>
            <person name="Ansari A.Z."/>
            <person name="Asturias F.J."/>
            <person name="Berk A.J."/>
            <person name="Bjoerklund S."/>
            <person name="Blackwell T.K."/>
            <person name="Borggrefe T."/>
            <person name="Carey M."/>
            <person name="Carlson M."/>
            <person name="Conaway J.W."/>
            <person name="Conaway R.C."/>
            <person name="Emmons S.W."/>
            <person name="Fondell J.D."/>
            <person name="Freedman L.P."/>
            <person name="Fukasawa T."/>
            <person name="Gustafsson C.M."/>
            <person name="Han M."/>
            <person name="He X."/>
            <person name="Herman P.K."/>
            <person name="Hinnebusch A.G."/>
            <person name="Holmberg S."/>
            <person name="Holstege F.C.P."/>
            <person name="Jaehning J.A."/>
            <person name="Kim Y.-J."/>
            <person name="Kuras L."/>
            <person name="Leutz A."/>
            <person name="Lis J.T."/>
            <person name="Meisterernest M."/>
            <person name="Naeaer A.M."/>
            <person name="Nasmyth K."/>
            <person name="Parvin J.D."/>
            <person name="Ptashne M."/>
            <person name="Reinberg D."/>
            <person name="Ronne H."/>
            <person name="Sadowski I."/>
            <person name="Sakurai H."/>
            <person name="Sipiczki M."/>
            <person name="Sternberg P.W."/>
            <person name="Stillman D.J."/>
            <person name="Strich R."/>
            <person name="Struhl K."/>
            <person name="Svejstrup J.Q."/>
            <person name="Tuck S."/>
            <person name="Winston F."/>
            <person name="Roeder R.G."/>
            <person name="Kornberg R.D."/>
        </authorList>
    </citation>
    <scope>NOMENCLATURE</scope>
</reference>
<reference key="12">
    <citation type="journal article" date="2004" name="Nucleic Acids Res.">
        <title>A high resolution protein interaction map of the yeast Mediator complex.</title>
        <authorList>
            <person name="Guglielmi B."/>
            <person name="van Berkum N.L."/>
            <person name="Klapholz B."/>
            <person name="Bijma T."/>
            <person name="Boube M."/>
            <person name="Boschiero C."/>
            <person name="Bourbon H.-M."/>
            <person name="Holstege F.C.P."/>
            <person name="Werner M."/>
        </authorList>
    </citation>
    <scope>TOPOLOGY OF THE MEDIATOR COMPLEX</scope>
</reference>
<reference key="13">
    <citation type="journal article" date="2005" name="J. Biol. Chem.">
        <title>Preponderance of free mediator in the yeast Saccharomyces cerevisiae.</title>
        <authorList>
            <person name="Takagi Y."/>
            <person name="Chadick J.Z."/>
            <person name="Davis J.A."/>
            <person name="Asturias F.J."/>
        </authorList>
    </citation>
    <scope>CHARACTERIZATION OF THE MEDIATOR COMPLEX</scope>
</reference>
<reference key="14">
    <citation type="journal article" date="2005" name="J. Biol. Chem.">
        <title>Mediator and TFIIH govern carboxyl-terminal domain-dependent transcription in yeast extracts.</title>
        <authorList>
            <person name="Nair D."/>
            <person name="Kim Y."/>
            <person name="Myers L.C."/>
        </authorList>
    </citation>
    <scope>FUNCTION OF THE MEDIATOR COMPLEX</scope>
</reference>
<reference key="15">
    <citation type="journal article" date="2006" name="J. Biol. Chem.">
        <title>Mediator as a general transcription factor.</title>
        <authorList>
            <person name="Takagi Y."/>
            <person name="Kornberg R.D."/>
        </authorList>
    </citation>
    <scope>FUNCTION OF THE MEDIATOR COMPLEX</scope>
</reference>
<reference key="16">
    <citation type="journal article" date="2006" name="Mol. Cell">
        <title>Head module control of mediator interactions.</title>
        <authorList>
            <person name="Takagi Y."/>
            <person name="Calero G."/>
            <person name="Komori H."/>
            <person name="Brown J.A."/>
            <person name="Ehrensberger A.H."/>
            <person name="Hudmon A."/>
            <person name="Asturias F.J."/>
            <person name="Kornberg R.D."/>
        </authorList>
    </citation>
    <scope>INTERACTION WITH SRB4</scope>
    <scope>FUNCTION OF THE MEDIATOR COMPLEX HEAD MODULE</scope>
    <scope>ELECTRON MICROSCOPY OF THE MEDIATOR COMPLEX HEAD MODULE</scope>
    <scope>INTERACTION OF THE MEDIATOR COMPLEX HEAD MODULE WITH RNA POLYMERASE II AND TFIIF</scope>
</reference>
<reference key="17">
    <citation type="journal article" date="2007" name="J. Biol. Chem.">
        <title>Med19(Rox3) regulates intermodule interactions in the Saccharomyces cerevisiae mediator complex.</title>
        <authorList>
            <person name="Baidoobonso S.M."/>
            <person name="Guidi B.W."/>
            <person name="Myers L.C."/>
        </authorList>
    </citation>
    <scope>INTERACTION WITH SRB5</scope>
    <scope>CHARACTERIZATION OF THE MEDIATOR COMPLEX</scope>
    <scope>INTERACTION OF THE MEDIATOR COMPLEX WITH RNA POLYMERASE II</scope>
</reference>
<reference key="18">
    <citation type="journal article" date="2009" name="Science">
        <title>Global analysis of Cdk1 substrate phosphorylation sites provides insights into evolution.</title>
        <authorList>
            <person name="Holt L.J."/>
            <person name="Tuch B.B."/>
            <person name="Villen J."/>
            <person name="Johnson A.D."/>
            <person name="Gygi S.P."/>
            <person name="Morgan D.O."/>
        </authorList>
    </citation>
    <scope>IDENTIFICATION BY MASS SPECTROMETRY [LARGE SCALE ANALYSIS]</scope>
</reference>
<reference key="19">
    <citation type="journal article" date="2002" name="Mol. Cell">
        <title>Structure of the yeast RNA polymerase II holoenzyme: mediator conformation and polymerase interaction.</title>
        <authorList>
            <person name="Davis J.A."/>
            <person name="Takagi Y."/>
            <person name="Kornberg R.D."/>
            <person name="Asturias F.J."/>
        </authorList>
    </citation>
    <scope>ELECTRON MICROSCOPY OF MEDIATOR COMPLEX IN COMPLEX WITH RNA POLYMERASE II</scope>
</reference>
<reference key="20">
    <citation type="journal article" date="2006" name="Nat. Struct. Mol. Biol.">
        <title>Structure and TBP binding of the Mediator head subcomplex Med8-Med18-Med20.</title>
        <authorList>
            <person name="Lariviere L."/>
            <person name="Geiger S."/>
            <person name="Hoeppner S."/>
            <person name="Roether S."/>
            <person name="Straesser K."/>
            <person name="Cramer P."/>
        </authorList>
    </citation>
    <scope>X-RAY STRUCTURE (2.7 ANGSTROMS) OF 190-210 IN COMPLEX WITH SRB2 AND SRB5</scope>
    <scope>INTERACTION WITH TBP1</scope>
</reference>
<keyword id="KW-0002">3D-structure</keyword>
<keyword id="KW-0010">Activator</keyword>
<keyword id="KW-0175">Coiled coil</keyword>
<keyword id="KW-0903">Direct protein sequencing</keyword>
<keyword id="KW-0238">DNA-binding</keyword>
<keyword id="KW-0539">Nucleus</keyword>
<keyword id="KW-1185">Reference proteome</keyword>
<keyword id="KW-0804">Transcription</keyword>
<keyword id="KW-0805">Transcription regulation</keyword>
<name>MED8_YEAST</name>
<protein>
    <recommendedName>
        <fullName>Mediator of RNA polymerase II transcription subunit 8</fullName>
    </recommendedName>
    <alternativeName>
        <fullName>Mediator complex subunit 8</fullName>
    </alternativeName>
</protein>
<accession>P38304</accession>
<accession>D6VQI7</accession>
<sequence>MSQSTASLVPEGNQGSLQEDVSFDFNGVPGQALDAVRMRLAQLTHSLRRIRDEMSKAELPQWYTLQSQLNVTLSQLVSVTSTLQHFQETLDSTVVYPLPKFPTTSHESLVTTLLRKKNIPEVDEWMKYVRETSGVTTALLKDEEIEKLLQQDREITNWARTTFRNEYGKHDFKNEESLSEEHASLLVRDSKPSKPFNVDDVLKFTFTGEKPIITGSTSTSSSN</sequence>
<proteinExistence type="evidence at protein level"/>